<accession>P29223</accession>
<gene>
    <name evidence="1" type="primary">rpsC</name>
</gene>
<evidence type="ECO:0000255" key="1">
    <source>
        <dbReference type="HAMAP-Rule" id="MF_01309"/>
    </source>
</evidence>
<evidence type="ECO:0000256" key="2">
    <source>
        <dbReference type="SAM" id="MobiDB-lite"/>
    </source>
</evidence>
<evidence type="ECO:0000305" key="3"/>
<keyword id="KW-0687">Ribonucleoprotein</keyword>
<keyword id="KW-0689">Ribosomal protein</keyword>
<keyword id="KW-0694">RNA-binding</keyword>
<keyword id="KW-0699">rRNA-binding</keyword>
<reference key="1">
    <citation type="journal article" date="1992" name="J. Bacteriol.">
        <title>Evolutionary relationships of a plant-pathogenic mycoplasmalike organism and Acholeplasma laidlawii deduced from two ribosomal protein gene sequences.</title>
        <authorList>
            <person name="Lim P.O."/>
            <person name="Sears B.B."/>
        </authorList>
    </citation>
    <scope>NUCLEOTIDE SEQUENCE [GENOMIC DNA]</scope>
</reference>
<organism>
    <name type="scientific">Acholeplasma laidlawii</name>
    <dbReference type="NCBI Taxonomy" id="2148"/>
    <lineage>
        <taxon>Bacteria</taxon>
        <taxon>Bacillati</taxon>
        <taxon>Mycoplasmatota</taxon>
        <taxon>Mollicutes</taxon>
        <taxon>Acholeplasmatales</taxon>
        <taxon>Acholeplasmataceae</taxon>
        <taxon>Acholeplasma</taxon>
    </lineage>
</organism>
<name>RS3_ACHLA</name>
<feature type="chain" id="PRO_0000130053" description="Small ribosomal subunit protein uS3">
    <location>
        <begin position="1"/>
        <end position="265"/>
    </location>
</feature>
<feature type="domain" description="KH type-2" evidence="1">
    <location>
        <begin position="39"/>
        <end position="111"/>
    </location>
</feature>
<feature type="region of interest" description="Disordered" evidence="2">
    <location>
        <begin position="224"/>
        <end position="250"/>
    </location>
</feature>
<feature type="compositionally biased region" description="Basic and acidic residues" evidence="2">
    <location>
        <begin position="238"/>
        <end position="250"/>
    </location>
</feature>
<dbReference type="EMBL" id="M74771">
    <property type="protein sequence ID" value="AAA21912.1"/>
    <property type="status" value="ALT_INIT"/>
    <property type="molecule type" value="Genomic_DNA"/>
</dbReference>
<dbReference type="PIR" id="D41839">
    <property type="entry name" value="D41839"/>
</dbReference>
<dbReference type="SMR" id="P29223"/>
<dbReference type="GO" id="GO:0022627">
    <property type="term" value="C:cytosolic small ribosomal subunit"/>
    <property type="evidence" value="ECO:0007669"/>
    <property type="project" value="TreeGrafter"/>
</dbReference>
<dbReference type="GO" id="GO:0003729">
    <property type="term" value="F:mRNA binding"/>
    <property type="evidence" value="ECO:0007669"/>
    <property type="project" value="UniProtKB-UniRule"/>
</dbReference>
<dbReference type="GO" id="GO:0019843">
    <property type="term" value="F:rRNA binding"/>
    <property type="evidence" value="ECO:0007669"/>
    <property type="project" value="UniProtKB-UniRule"/>
</dbReference>
<dbReference type="GO" id="GO:0003735">
    <property type="term" value="F:structural constituent of ribosome"/>
    <property type="evidence" value="ECO:0007669"/>
    <property type="project" value="InterPro"/>
</dbReference>
<dbReference type="GO" id="GO:0006412">
    <property type="term" value="P:translation"/>
    <property type="evidence" value="ECO:0007669"/>
    <property type="project" value="UniProtKB-UniRule"/>
</dbReference>
<dbReference type="CDD" id="cd02412">
    <property type="entry name" value="KH-II_30S_S3"/>
    <property type="match status" value="1"/>
</dbReference>
<dbReference type="FunFam" id="3.30.300.20:FF:000001">
    <property type="entry name" value="30S ribosomal protein S3"/>
    <property type="match status" value="1"/>
</dbReference>
<dbReference type="Gene3D" id="3.30.300.20">
    <property type="match status" value="1"/>
</dbReference>
<dbReference type="Gene3D" id="3.30.1140.32">
    <property type="entry name" value="Ribosomal protein S3, C-terminal domain"/>
    <property type="match status" value="1"/>
</dbReference>
<dbReference type="HAMAP" id="MF_01309_B">
    <property type="entry name" value="Ribosomal_uS3_B"/>
    <property type="match status" value="1"/>
</dbReference>
<dbReference type="InterPro" id="IPR015946">
    <property type="entry name" value="KH_dom-like_a/b"/>
</dbReference>
<dbReference type="InterPro" id="IPR004044">
    <property type="entry name" value="KH_dom_type_2"/>
</dbReference>
<dbReference type="InterPro" id="IPR009019">
    <property type="entry name" value="KH_sf_prok-type"/>
</dbReference>
<dbReference type="InterPro" id="IPR036419">
    <property type="entry name" value="Ribosomal_S3_C_sf"/>
</dbReference>
<dbReference type="InterPro" id="IPR005704">
    <property type="entry name" value="Ribosomal_uS3_bac-typ"/>
</dbReference>
<dbReference type="InterPro" id="IPR001351">
    <property type="entry name" value="Ribosomal_uS3_C"/>
</dbReference>
<dbReference type="InterPro" id="IPR018280">
    <property type="entry name" value="Ribosomal_uS3_CS"/>
</dbReference>
<dbReference type="NCBIfam" id="TIGR01009">
    <property type="entry name" value="rpsC_bact"/>
    <property type="match status" value="1"/>
</dbReference>
<dbReference type="PANTHER" id="PTHR11760">
    <property type="entry name" value="30S/40S RIBOSOMAL PROTEIN S3"/>
    <property type="match status" value="1"/>
</dbReference>
<dbReference type="PANTHER" id="PTHR11760:SF19">
    <property type="entry name" value="SMALL RIBOSOMAL SUBUNIT PROTEIN US3C"/>
    <property type="match status" value="1"/>
</dbReference>
<dbReference type="Pfam" id="PF07650">
    <property type="entry name" value="KH_2"/>
    <property type="match status" value="1"/>
</dbReference>
<dbReference type="Pfam" id="PF00189">
    <property type="entry name" value="Ribosomal_S3_C"/>
    <property type="match status" value="1"/>
</dbReference>
<dbReference type="SUPFAM" id="SSF54814">
    <property type="entry name" value="Prokaryotic type KH domain (KH-domain type II)"/>
    <property type="match status" value="1"/>
</dbReference>
<dbReference type="SUPFAM" id="SSF54821">
    <property type="entry name" value="Ribosomal protein S3 C-terminal domain"/>
    <property type="match status" value="1"/>
</dbReference>
<dbReference type="PROSITE" id="PS50823">
    <property type="entry name" value="KH_TYPE_2"/>
    <property type="match status" value="1"/>
</dbReference>
<dbReference type="PROSITE" id="PS00548">
    <property type="entry name" value="RIBOSOMAL_S3"/>
    <property type="match status" value="1"/>
</dbReference>
<comment type="function">
    <text evidence="1">Binds the lower part of the 30S subunit head. Binds mRNA in the 70S ribosome, positioning it for translation.</text>
</comment>
<comment type="subunit">
    <text evidence="1">Part of the 30S ribosomal subunit. Forms a tight complex with proteins S10 and S14.</text>
</comment>
<comment type="similarity">
    <text evidence="1">Belongs to the universal ribosomal protein uS3 family.</text>
</comment>
<comment type="sequence caution" evidence="3">
    <conflict type="erroneous initiation">
        <sequence resource="EMBL-CDS" id="AAA21912"/>
    </conflict>
</comment>
<proteinExistence type="inferred from homology"/>
<protein>
    <recommendedName>
        <fullName evidence="1">Small ribosomal subunit protein uS3</fullName>
    </recommendedName>
    <alternativeName>
        <fullName evidence="3">30S ribosomal protein S3</fullName>
    </alternativeName>
</protein>
<sequence length="265" mass="29812">MGQKTNPNGLRLGIIRTWESKRYADQKDVPALIKEDALIREFLNENFSKAGVSQIEIERVKAKSKERVTIKLYVSKPGIALGKEASVKNKAVSNLEYLTKKEVILNIIEVRRPEKVAVLVAQSIAEQLENRASFRRAQKMAIQRALKSGAKGIRTLVSGRLGGAEMARSEGYSEGRVPLHTLRADVDYATAEASTTYGILGIKVWIYHGEVLPGQSILDTRKPFEAGNQRRGQKRRPRNDQPVKDLNKEKEIARRTNYYVNAKKN</sequence>